<accession>P18492</accession>
<sequence>MAGAAAAVASGISIRPVAAPKISRAPRSRSVVRAAVSIDEKAYTVQKSEEIFNAAKELMPGGVNSPVRAFKSVGGQPIVFDSVKGSHMWDVDGNEYIDYVGSWGPAIIGHADDKVNAALIETLKKGTSFGAPCALENVLAQMVISAVPSIEMVRFVNSGTEACMGALRLVRAFTGREKILKFEGCYHGHADSFLVKAGSGVATLGLPDSPGVPKGATVGTLTAPYNDADAVKKLFEDNKGEIAAVFLEPVVGNAGFIPPQPAFLNALREVTKQDGALLVFDEVMTGFRLAYGGAQEYFGITPDVTTLGKIIGGGLPVGAYGGRKDIMEMVAPAGPMYQAGTLSGNPLAMTAGIHTLKRLMEPGTYEYLDKVTGELVRGILDVGAKTGHEMCGGHIRGMFGFFFAGGPVHNFDDAKKSDTAKFGRFHRGMLGEGVYLAPSQFEAGFTSLAHTTQDIEKTVEAAEKVLRWI</sequence>
<feature type="transit peptide" description="Chloroplast">
    <location>
        <begin position="1"/>
        <end position="34"/>
    </location>
</feature>
<feature type="chain" id="PRO_0000001258" description="Glutamate-1-semialdehyde 2,1-aminomutase, chloroplastic">
    <location>
        <begin position="35"/>
        <end position="469"/>
    </location>
</feature>
<feature type="modified residue" description="N6-(pyridoxal phosphate)lysine" evidence="1">
    <location>
        <position position="309"/>
    </location>
</feature>
<feature type="sequence conflict" description="In Ref. 2; AA sequence." evidence="2" ref="2">
    <original>K</original>
    <variation>Q</variation>
    <location>
        <position position="309"/>
    </location>
</feature>
<proteinExistence type="evidence at protein level"/>
<keyword id="KW-0149">Chlorophyll biosynthesis</keyword>
<keyword id="KW-0150">Chloroplast</keyword>
<keyword id="KW-0903">Direct protein sequencing</keyword>
<keyword id="KW-0413">Isomerase</keyword>
<keyword id="KW-0934">Plastid</keyword>
<keyword id="KW-0627">Porphyrin biosynthesis</keyword>
<keyword id="KW-0663">Pyridoxal phosphate</keyword>
<keyword id="KW-0809">Transit peptide</keyword>
<dbReference type="EC" id="5.4.3.8"/>
<dbReference type="EMBL" id="M31545">
    <property type="protein sequence ID" value="AAB59330.1"/>
    <property type="molecule type" value="mRNA"/>
</dbReference>
<dbReference type="PIR" id="A35789">
    <property type="entry name" value="A35789"/>
</dbReference>
<dbReference type="SMR" id="P18492"/>
<dbReference type="UniPathway" id="UPA00251">
    <property type="reaction ID" value="UER00317"/>
</dbReference>
<dbReference type="UniPathway" id="UPA00668"/>
<dbReference type="ExpressionAtlas" id="P18492">
    <property type="expression patterns" value="baseline and differential"/>
</dbReference>
<dbReference type="GO" id="GO:0009507">
    <property type="term" value="C:chloroplast"/>
    <property type="evidence" value="ECO:0007669"/>
    <property type="project" value="UniProtKB-SubCell"/>
</dbReference>
<dbReference type="GO" id="GO:0042286">
    <property type="term" value="F:glutamate-1-semialdehyde 2,1-aminomutase activity"/>
    <property type="evidence" value="ECO:0007669"/>
    <property type="project" value="UniProtKB-EC"/>
</dbReference>
<dbReference type="GO" id="GO:0030170">
    <property type="term" value="F:pyridoxal phosphate binding"/>
    <property type="evidence" value="ECO:0007669"/>
    <property type="project" value="InterPro"/>
</dbReference>
<dbReference type="GO" id="GO:0008483">
    <property type="term" value="F:transaminase activity"/>
    <property type="evidence" value="ECO:0007669"/>
    <property type="project" value="InterPro"/>
</dbReference>
<dbReference type="GO" id="GO:0015995">
    <property type="term" value="P:chlorophyll biosynthetic process"/>
    <property type="evidence" value="ECO:0007669"/>
    <property type="project" value="UniProtKB-UniPathway"/>
</dbReference>
<dbReference type="GO" id="GO:0006782">
    <property type="term" value="P:protoporphyrinogen IX biosynthetic process"/>
    <property type="evidence" value="ECO:0007669"/>
    <property type="project" value="UniProtKB-UniPathway"/>
</dbReference>
<dbReference type="CDD" id="cd00610">
    <property type="entry name" value="OAT_like"/>
    <property type="match status" value="1"/>
</dbReference>
<dbReference type="FunFam" id="3.40.640.10:FF:000021">
    <property type="entry name" value="Glutamate-1-semialdehyde 2,1-aminomutase"/>
    <property type="match status" value="1"/>
</dbReference>
<dbReference type="FunFam" id="3.90.1150.10:FF:000012">
    <property type="entry name" value="Glutamate-1-semialdehyde 2,1-aminomutase"/>
    <property type="match status" value="1"/>
</dbReference>
<dbReference type="Gene3D" id="3.90.1150.10">
    <property type="entry name" value="Aspartate Aminotransferase, domain 1"/>
    <property type="match status" value="1"/>
</dbReference>
<dbReference type="Gene3D" id="3.40.640.10">
    <property type="entry name" value="Type I PLP-dependent aspartate aminotransferase-like (Major domain)"/>
    <property type="match status" value="1"/>
</dbReference>
<dbReference type="HAMAP" id="MF_00375">
    <property type="entry name" value="HemL_aminotrans_3"/>
    <property type="match status" value="1"/>
</dbReference>
<dbReference type="InterPro" id="IPR004639">
    <property type="entry name" value="4pyrrol_synth_GluAld_NH2Trfase"/>
</dbReference>
<dbReference type="InterPro" id="IPR005814">
    <property type="entry name" value="Aminotrans_3"/>
</dbReference>
<dbReference type="InterPro" id="IPR049704">
    <property type="entry name" value="Aminotrans_3_PPA_site"/>
</dbReference>
<dbReference type="InterPro" id="IPR015424">
    <property type="entry name" value="PyrdxlP-dep_Trfase"/>
</dbReference>
<dbReference type="InterPro" id="IPR015421">
    <property type="entry name" value="PyrdxlP-dep_Trfase_major"/>
</dbReference>
<dbReference type="InterPro" id="IPR015422">
    <property type="entry name" value="PyrdxlP-dep_Trfase_small"/>
</dbReference>
<dbReference type="NCBIfam" id="TIGR00713">
    <property type="entry name" value="hemL"/>
    <property type="match status" value="1"/>
</dbReference>
<dbReference type="NCBIfam" id="NF000818">
    <property type="entry name" value="PRK00062.1"/>
    <property type="match status" value="1"/>
</dbReference>
<dbReference type="PANTHER" id="PTHR43713">
    <property type="entry name" value="GLUTAMATE-1-SEMIALDEHYDE 2,1-AMINOMUTASE"/>
    <property type="match status" value="1"/>
</dbReference>
<dbReference type="PANTHER" id="PTHR43713:SF3">
    <property type="entry name" value="GLUTAMATE-1-SEMIALDEHYDE 2,1-AMINOMUTASE 1, CHLOROPLASTIC-RELATED"/>
    <property type="match status" value="1"/>
</dbReference>
<dbReference type="Pfam" id="PF00202">
    <property type="entry name" value="Aminotran_3"/>
    <property type="match status" value="1"/>
</dbReference>
<dbReference type="SUPFAM" id="SSF53383">
    <property type="entry name" value="PLP-dependent transferases"/>
    <property type="match status" value="1"/>
</dbReference>
<dbReference type="PROSITE" id="PS00600">
    <property type="entry name" value="AA_TRANSFER_CLASS_3"/>
    <property type="match status" value="1"/>
</dbReference>
<protein>
    <recommendedName>
        <fullName>Glutamate-1-semialdehyde 2,1-aminomutase, chloroplastic</fullName>
        <shortName>GSA</shortName>
        <ecNumber>5.4.3.8</ecNumber>
    </recommendedName>
    <alternativeName>
        <fullName>Glutamate-1-semialdehyde aminotransferase</fullName>
        <shortName>GSA-AT</shortName>
    </alternativeName>
</protein>
<organism>
    <name type="scientific">Hordeum vulgare</name>
    <name type="common">Barley</name>
    <dbReference type="NCBI Taxonomy" id="4513"/>
    <lineage>
        <taxon>Eukaryota</taxon>
        <taxon>Viridiplantae</taxon>
        <taxon>Streptophyta</taxon>
        <taxon>Embryophyta</taxon>
        <taxon>Tracheophyta</taxon>
        <taxon>Spermatophyta</taxon>
        <taxon>Magnoliopsida</taxon>
        <taxon>Liliopsida</taxon>
        <taxon>Poales</taxon>
        <taxon>Poaceae</taxon>
        <taxon>BOP clade</taxon>
        <taxon>Pooideae</taxon>
        <taxon>Triticodae</taxon>
        <taxon>Triticeae</taxon>
        <taxon>Hordeinae</taxon>
        <taxon>Hordeum</taxon>
    </lineage>
</organism>
<reference key="1">
    <citation type="journal article" date="1990" name="Proc. Natl. Acad. Sci. U.S.A.">
        <title>Primary structure of a key enzyme in plant tetrapyrrole synthesis: glutamate 1-semialdehyde aminotransferase.</title>
        <authorList>
            <person name="Grimm B."/>
        </authorList>
    </citation>
    <scope>NUCLEOTIDE SEQUENCE [MRNA]</scope>
    <scope>PARTIAL PROTEIN SEQUENCE</scope>
    <source>
        <strain>cv. Bonus</strain>
        <tissue>Seedling</tissue>
    </source>
</reference>
<reference key="2">
    <citation type="journal article" date="1989" name="Carlsberg Res. Commun.">
        <title>Purification and partial amino acid sequence of the glutamate 1-semialdehyde aminotransferase of barley and synechococcus.</title>
        <authorList>
            <person name="Grimm B."/>
            <person name="Bull A."/>
            <person name="Welinder K.G."/>
            <person name="Gough S.P."/>
            <person name="Kannangara C.G."/>
        </authorList>
    </citation>
    <scope>PARTIAL PROTEIN SEQUENCE</scope>
</reference>
<comment type="catalytic activity">
    <reaction>
        <text>(S)-4-amino-5-oxopentanoate = 5-aminolevulinate</text>
        <dbReference type="Rhea" id="RHEA:14265"/>
        <dbReference type="ChEBI" id="CHEBI:57501"/>
        <dbReference type="ChEBI" id="CHEBI:356416"/>
        <dbReference type="EC" id="5.4.3.8"/>
    </reaction>
</comment>
<comment type="cofactor">
    <cofactor>
        <name>pyridoxal 5'-phosphate</name>
        <dbReference type="ChEBI" id="CHEBI:597326"/>
    </cofactor>
</comment>
<comment type="pathway">
    <text>Porphyrin-containing compound metabolism; protoporphyrin-IX biosynthesis; 5-aminolevulinate from L-glutamyl-tRNA(Glu): step 2/2.</text>
</comment>
<comment type="pathway">
    <text>Porphyrin-containing compound metabolism; chlorophyll biosynthesis.</text>
</comment>
<comment type="subunit">
    <text>Homodimer.</text>
</comment>
<comment type="subcellular location">
    <subcellularLocation>
        <location>Plastid</location>
        <location>Chloroplast</location>
    </subcellularLocation>
</comment>
<comment type="similarity">
    <text evidence="2">Belongs to the class-III pyridoxal-phosphate-dependent aminotransferase family. HemL subfamily.</text>
</comment>
<evidence type="ECO:0000250" key="1"/>
<evidence type="ECO:0000305" key="2"/>
<gene>
    <name type="primary">GSA</name>
</gene>
<name>GSA_HORVU</name>